<evidence type="ECO:0000255" key="1">
    <source>
        <dbReference type="HAMAP-Rule" id="MF_02004"/>
    </source>
</evidence>
<sequence length="880" mass="101882">MAQHEVSMPPKYDHRAVEAGRYEWWLKGKFFEATGDPNKRPFTIVIPPPNVTGKLHLGHAWDTTLQDIITRMKRMQGYDVLWLPGMDHAGIATQAKVEEKLRQQGLSRYDLGREKFLEETWKWKEEYAGHIRSQWAKLGLGLDYTRERFTLDEGLSKAVREVFVSLYRKGLIYRGEYIINWDPVTKTALSDIEVVYKEVKGALYHLRYPLADGSGCIEVATTRPETMLGDTAVAVHPDDERYKHLIGKMVKLPIVGREIPIIADEYVDMEFGSGAVKITPAHDPNDFEIGNRHNLPRILVMNEDGTMNENAMQYQGLDRFECRKQIVRDLQEQGVLFKIEEHVHSVGHSERSGAVVEPYLSTQWFVKMKPLAEAAIKLQQTDEKVQFVPDRFEKTYLHWLENIRDWCISRQLWWGHRIPAWYHKETGEIYVDHEPPKDIENWEQDPDVLDTWFSSALWPFSTMGWPDTESPDYKRYYPTDVLVTGYDIIFFWVSRMIFQGLEFTGKRPFKDVLIHGLVRDAQGRKMSKSLGNGVDPMDVIDQYGADALRYFLATGSSPGQDLRFSTEKVEATWNFANKIWNASRFALMNMGGMTYEELDLSGEKTVADHWILTRLNETIETVTKLAEKYEFGEVGRTLYNFIWDDLCDWYIEMAKLPLYGADEAAKKTTRSVLAYVLDNTMRLLHPFMPFITEEIWQNLPHEGESITVAPWPQVRPELSNEEAAEEMRLLVDIIRAVRSVRAEVNTPPSKPIALYIKVKDEQVRAALMKNRAYLERFCNPSELLIDTNVPAPDKAMTAVVTGAELIMPLEGLINIEEEIKRLEKELDKWNKEVERVEKKLANEGFLAKAPAHVVEEERRKRQDYIEKREAVKARLAELKR</sequence>
<gene>
    <name evidence="1" type="primary">valS</name>
    <name type="ordered locus">GK2638</name>
</gene>
<protein>
    <recommendedName>
        <fullName evidence="1">Valine--tRNA ligase</fullName>
        <ecNumber evidence="1">6.1.1.9</ecNumber>
    </recommendedName>
    <alternativeName>
        <fullName evidence="1">Valyl-tRNA synthetase</fullName>
        <shortName evidence="1">ValRS</shortName>
    </alternativeName>
</protein>
<proteinExistence type="inferred from homology"/>
<name>SYV_GEOKA</name>
<dbReference type="EC" id="6.1.1.9" evidence="1"/>
<dbReference type="EMBL" id="BA000043">
    <property type="protein sequence ID" value="BAD76923.1"/>
    <property type="molecule type" value="Genomic_DNA"/>
</dbReference>
<dbReference type="RefSeq" id="WP_011232114.1">
    <property type="nucleotide sequence ID" value="NC_006510.1"/>
</dbReference>
<dbReference type="SMR" id="Q5KWL3"/>
<dbReference type="STRING" id="235909.GK2638"/>
<dbReference type="KEGG" id="gka:GK2638"/>
<dbReference type="PATRIC" id="fig|235909.7.peg.2818"/>
<dbReference type="eggNOG" id="COG0525">
    <property type="taxonomic scope" value="Bacteria"/>
</dbReference>
<dbReference type="HOGENOM" id="CLU_001493_0_2_9"/>
<dbReference type="Proteomes" id="UP000001172">
    <property type="component" value="Chromosome"/>
</dbReference>
<dbReference type="GO" id="GO:0005829">
    <property type="term" value="C:cytosol"/>
    <property type="evidence" value="ECO:0007669"/>
    <property type="project" value="TreeGrafter"/>
</dbReference>
<dbReference type="GO" id="GO:0002161">
    <property type="term" value="F:aminoacyl-tRNA deacylase activity"/>
    <property type="evidence" value="ECO:0007669"/>
    <property type="project" value="InterPro"/>
</dbReference>
<dbReference type="GO" id="GO:0005524">
    <property type="term" value="F:ATP binding"/>
    <property type="evidence" value="ECO:0007669"/>
    <property type="project" value="UniProtKB-UniRule"/>
</dbReference>
<dbReference type="GO" id="GO:0004832">
    <property type="term" value="F:valine-tRNA ligase activity"/>
    <property type="evidence" value="ECO:0007669"/>
    <property type="project" value="UniProtKB-UniRule"/>
</dbReference>
<dbReference type="GO" id="GO:0006438">
    <property type="term" value="P:valyl-tRNA aminoacylation"/>
    <property type="evidence" value="ECO:0007669"/>
    <property type="project" value="UniProtKB-UniRule"/>
</dbReference>
<dbReference type="CDD" id="cd07962">
    <property type="entry name" value="Anticodon_Ia_Val"/>
    <property type="match status" value="1"/>
</dbReference>
<dbReference type="CDD" id="cd00817">
    <property type="entry name" value="ValRS_core"/>
    <property type="match status" value="1"/>
</dbReference>
<dbReference type="FunFam" id="1.10.287.380:FF:000001">
    <property type="entry name" value="Valine--tRNA ligase"/>
    <property type="match status" value="1"/>
</dbReference>
<dbReference type="FunFam" id="1.10.730.10:FF:000014">
    <property type="entry name" value="Valine--tRNA ligase"/>
    <property type="match status" value="1"/>
</dbReference>
<dbReference type="FunFam" id="3.40.50.620:FF:000032">
    <property type="entry name" value="Valine--tRNA ligase"/>
    <property type="match status" value="1"/>
</dbReference>
<dbReference type="FunFam" id="3.40.50.620:FF:000098">
    <property type="entry name" value="Valine--tRNA ligase"/>
    <property type="match status" value="1"/>
</dbReference>
<dbReference type="FunFam" id="3.90.740.10:FF:000005">
    <property type="entry name" value="Valine--tRNA ligase, mitochondrial"/>
    <property type="match status" value="1"/>
</dbReference>
<dbReference type="Gene3D" id="3.40.50.620">
    <property type="entry name" value="HUPs"/>
    <property type="match status" value="3"/>
</dbReference>
<dbReference type="Gene3D" id="1.10.730.10">
    <property type="entry name" value="Isoleucyl-tRNA Synthetase, Domain 1"/>
    <property type="match status" value="1"/>
</dbReference>
<dbReference type="Gene3D" id="1.10.287.380">
    <property type="entry name" value="Valyl-tRNA synthetase, C-terminal domain"/>
    <property type="match status" value="1"/>
</dbReference>
<dbReference type="Gene3D" id="3.90.740.10">
    <property type="entry name" value="Valyl/Leucyl/Isoleucyl-tRNA synthetase, editing domain"/>
    <property type="match status" value="1"/>
</dbReference>
<dbReference type="HAMAP" id="MF_02004">
    <property type="entry name" value="Val_tRNA_synth_type1"/>
    <property type="match status" value="1"/>
</dbReference>
<dbReference type="InterPro" id="IPR001412">
    <property type="entry name" value="aa-tRNA-synth_I_CS"/>
</dbReference>
<dbReference type="InterPro" id="IPR002300">
    <property type="entry name" value="aa-tRNA-synth_Ia"/>
</dbReference>
<dbReference type="InterPro" id="IPR033705">
    <property type="entry name" value="Anticodon_Ia_Val"/>
</dbReference>
<dbReference type="InterPro" id="IPR013155">
    <property type="entry name" value="M/V/L/I-tRNA-synth_anticd-bd"/>
</dbReference>
<dbReference type="InterPro" id="IPR014729">
    <property type="entry name" value="Rossmann-like_a/b/a_fold"/>
</dbReference>
<dbReference type="InterPro" id="IPR010978">
    <property type="entry name" value="tRNA-bd_arm"/>
</dbReference>
<dbReference type="InterPro" id="IPR009080">
    <property type="entry name" value="tRNAsynth_Ia_anticodon-bd"/>
</dbReference>
<dbReference type="InterPro" id="IPR037118">
    <property type="entry name" value="Val-tRNA_synth_C_sf"/>
</dbReference>
<dbReference type="InterPro" id="IPR019499">
    <property type="entry name" value="Val-tRNA_synth_tRNA-bd"/>
</dbReference>
<dbReference type="InterPro" id="IPR009008">
    <property type="entry name" value="Val/Leu/Ile-tRNA-synth_edit"/>
</dbReference>
<dbReference type="InterPro" id="IPR002303">
    <property type="entry name" value="Valyl-tRNA_ligase"/>
</dbReference>
<dbReference type="NCBIfam" id="NF004349">
    <property type="entry name" value="PRK05729.1"/>
    <property type="match status" value="1"/>
</dbReference>
<dbReference type="NCBIfam" id="TIGR00422">
    <property type="entry name" value="valS"/>
    <property type="match status" value="1"/>
</dbReference>
<dbReference type="PANTHER" id="PTHR11946:SF93">
    <property type="entry name" value="VALINE--TRNA LIGASE, CHLOROPLASTIC_MITOCHONDRIAL 2"/>
    <property type="match status" value="1"/>
</dbReference>
<dbReference type="PANTHER" id="PTHR11946">
    <property type="entry name" value="VALYL-TRNA SYNTHETASES"/>
    <property type="match status" value="1"/>
</dbReference>
<dbReference type="Pfam" id="PF08264">
    <property type="entry name" value="Anticodon_1"/>
    <property type="match status" value="1"/>
</dbReference>
<dbReference type="Pfam" id="PF00133">
    <property type="entry name" value="tRNA-synt_1"/>
    <property type="match status" value="1"/>
</dbReference>
<dbReference type="Pfam" id="PF10458">
    <property type="entry name" value="Val_tRNA-synt_C"/>
    <property type="match status" value="1"/>
</dbReference>
<dbReference type="PRINTS" id="PR00986">
    <property type="entry name" value="TRNASYNTHVAL"/>
</dbReference>
<dbReference type="SUPFAM" id="SSF47323">
    <property type="entry name" value="Anticodon-binding domain of a subclass of class I aminoacyl-tRNA synthetases"/>
    <property type="match status" value="1"/>
</dbReference>
<dbReference type="SUPFAM" id="SSF52374">
    <property type="entry name" value="Nucleotidylyl transferase"/>
    <property type="match status" value="1"/>
</dbReference>
<dbReference type="SUPFAM" id="SSF46589">
    <property type="entry name" value="tRNA-binding arm"/>
    <property type="match status" value="1"/>
</dbReference>
<dbReference type="SUPFAM" id="SSF50677">
    <property type="entry name" value="ValRS/IleRS/LeuRS editing domain"/>
    <property type="match status" value="1"/>
</dbReference>
<dbReference type="PROSITE" id="PS00178">
    <property type="entry name" value="AA_TRNA_LIGASE_I"/>
    <property type="match status" value="1"/>
</dbReference>
<accession>Q5KWL3</accession>
<organism>
    <name type="scientific">Geobacillus kaustophilus (strain HTA426)</name>
    <dbReference type="NCBI Taxonomy" id="235909"/>
    <lineage>
        <taxon>Bacteria</taxon>
        <taxon>Bacillati</taxon>
        <taxon>Bacillota</taxon>
        <taxon>Bacilli</taxon>
        <taxon>Bacillales</taxon>
        <taxon>Anoxybacillaceae</taxon>
        <taxon>Geobacillus</taxon>
        <taxon>Geobacillus thermoleovorans group</taxon>
    </lineage>
</organism>
<keyword id="KW-0030">Aminoacyl-tRNA synthetase</keyword>
<keyword id="KW-0067">ATP-binding</keyword>
<keyword id="KW-0175">Coiled coil</keyword>
<keyword id="KW-0963">Cytoplasm</keyword>
<keyword id="KW-0436">Ligase</keyword>
<keyword id="KW-0547">Nucleotide-binding</keyword>
<keyword id="KW-0648">Protein biosynthesis</keyword>
<keyword id="KW-1185">Reference proteome</keyword>
<reference key="1">
    <citation type="journal article" date="2004" name="Nucleic Acids Res.">
        <title>Thermoadaptation trait revealed by the genome sequence of thermophilic Geobacillus kaustophilus.</title>
        <authorList>
            <person name="Takami H."/>
            <person name="Takaki Y."/>
            <person name="Chee G.-J."/>
            <person name="Nishi S."/>
            <person name="Shimamura S."/>
            <person name="Suzuki H."/>
            <person name="Matsui S."/>
            <person name="Uchiyama I."/>
        </authorList>
    </citation>
    <scope>NUCLEOTIDE SEQUENCE [LARGE SCALE GENOMIC DNA]</scope>
    <source>
        <strain>HTA426</strain>
    </source>
</reference>
<comment type="function">
    <text evidence="1">Catalyzes the attachment of valine to tRNA(Val). As ValRS can inadvertently accommodate and process structurally similar amino acids such as threonine, to avoid such errors, it has a 'posttransfer' editing activity that hydrolyzes mischarged Thr-tRNA(Val) in a tRNA-dependent manner.</text>
</comment>
<comment type="catalytic activity">
    <reaction evidence="1">
        <text>tRNA(Val) + L-valine + ATP = L-valyl-tRNA(Val) + AMP + diphosphate</text>
        <dbReference type="Rhea" id="RHEA:10704"/>
        <dbReference type="Rhea" id="RHEA-COMP:9672"/>
        <dbReference type="Rhea" id="RHEA-COMP:9708"/>
        <dbReference type="ChEBI" id="CHEBI:30616"/>
        <dbReference type="ChEBI" id="CHEBI:33019"/>
        <dbReference type="ChEBI" id="CHEBI:57762"/>
        <dbReference type="ChEBI" id="CHEBI:78442"/>
        <dbReference type="ChEBI" id="CHEBI:78537"/>
        <dbReference type="ChEBI" id="CHEBI:456215"/>
        <dbReference type="EC" id="6.1.1.9"/>
    </reaction>
</comment>
<comment type="subunit">
    <text evidence="1">Monomer.</text>
</comment>
<comment type="subcellular location">
    <subcellularLocation>
        <location evidence="1">Cytoplasm</location>
    </subcellularLocation>
</comment>
<comment type="domain">
    <text evidence="1">ValRS has two distinct active sites: one for aminoacylation and one for editing. The misactivated threonine is translocated from the active site to the editing site.</text>
</comment>
<comment type="domain">
    <text evidence="1">The C-terminal coiled-coil domain is crucial for aminoacylation activity.</text>
</comment>
<comment type="similarity">
    <text evidence="1">Belongs to the class-I aminoacyl-tRNA synthetase family. ValS type 1 subfamily.</text>
</comment>
<feature type="chain" id="PRO_0000224481" description="Valine--tRNA ligase">
    <location>
        <begin position="1"/>
        <end position="880"/>
    </location>
</feature>
<feature type="coiled-coil region" evidence="1">
    <location>
        <begin position="809"/>
        <end position="880"/>
    </location>
</feature>
<feature type="short sequence motif" description="'HIGH' region">
    <location>
        <begin position="49"/>
        <end position="59"/>
    </location>
</feature>
<feature type="short sequence motif" description="'KMSKS' region">
    <location>
        <begin position="525"/>
        <end position="529"/>
    </location>
</feature>
<feature type="binding site" evidence="1">
    <location>
        <position position="528"/>
    </location>
    <ligand>
        <name>ATP</name>
        <dbReference type="ChEBI" id="CHEBI:30616"/>
    </ligand>
</feature>